<protein>
    <recommendedName>
        <fullName evidence="1">Ribosomal RNA large subunit methyltransferase G</fullName>
        <ecNumber evidence="1">2.1.1.174</ecNumber>
    </recommendedName>
    <alternativeName>
        <fullName evidence="1">23S rRNA m2G1835 methyltransferase</fullName>
    </alternativeName>
    <alternativeName>
        <fullName evidence="1">rRNA (guanine-N(2)-)-methyltransferase RlmG</fullName>
    </alternativeName>
</protein>
<proteinExistence type="inferred from homology"/>
<keyword id="KW-0963">Cytoplasm</keyword>
<keyword id="KW-0489">Methyltransferase</keyword>
<keyword id="KW-0698">rRNA processing</keyword>
<keyword id="KW-0949">S-adenosyl-L-methionine</keyword>
<keyword id="KW-0808">Transferase</keyword>
<gene>
    <name evidence="1" type="primary">rlmG</name>
    <name type="ordered locus">CPS_0711</name>
</gene>
<name>RLMG_COLP3</name>
<comment type="function">
    <text evidence="1">Specifically methylates the guanine in position 1835 (m2G1835) of 23S rRNA.</text>
</comment>
<comment type="catalytic activity">
    <reaction evidence="1">
        <text>guanosine(1835) in 23S rRNA + S-adenosyl-L-methionine = N(2)-methylguanosine(1835) in 23S rRNA + S-adenosyl-L-homocysteine + H(+)</text>
        <dbReference type="Rhea" id="RHEA:42744"/>
        <dbReference type="Rhea" id="RHEA-COMP:10217"/>
        <dbReference type="Rhea" id="RHEA-COMP:10218"/>
        <dbReference type="ChEBI" id="CHEBI:15378"/>
        <dbReference type="ChEBI" id="CHEBI:57856"/>
        <dbReference type="ChEBI" id="CHEBI:59789"/>
        <dbReference type="ChEBI" id="CHEBI:74269"/>
        <dbReference type="ChEBI" id="CHEBI:74481"/>
        <dbReference type="EC" id="2.1.1.174"/>
    </reaction>
</comment>
<comment type="subcellular location">
    <subcellularLocation>
        <location evidence="1">Cytoplasm</location>
    </subcellularLocation>
</comment>
<comment type="similarity">
    <text evidence="1">Belongs to the methyltransferase superfamily. RlmG family.</text>
</comment>
<accession>Q488Q3</accession>
<dbReference type="EC" id="2.1.1.174" evidence="1"/>
<dbReference type="EMBL" id="CP000083">
    <property type="protein sequence ID" value="AAZ28509.1"/>
    <property type="molecule type" value="Genomic_DNA"/>
</dbReference>
<dbReference type="RefSeq" id="WP_011041561.1">
    <property type="nucleotide sequence ID" value="NC_003910.7"/>
</dbReference>
<dbReference type="SMR" id="Q488Q3"/>
<dbReference type="STRING" id="167879.CPS_0711"/>
<dbReference type="KEGG" id="cps:CPS_0711"/>
<dbReference type="HOGENOM" id="CLU_040288_4_0_6"/>
<dbReference type="Proteomes" id="UP000000547">
    <property type="component" value="Chromosome"/>
</dbReference>
<dbReference type="GO" id="GO:0005737">
    <property type="term" value="C:cytoplasm"/>
    <property type="evidence" value="ECO:0007669"/>
    <property type="project" value="UniProtKB-SubCell"/>
</dbReference>
<dbReference type="GO" id="GO:0052916">
    <property type="term" value="F:23S rRNA (guanine(1835)-N(2))-methyltransferase activity"/>
    <property type="evidence" value="ECO:0007669"/>
    <property type="project" value="UniProtKB-EC"/>
</dbReference>
<dbReference type="GO" id="GO:0003676">
    <property type="term" value="F:nucleic acid binding"/>
    <property type="evidence" value="ECO:0007669"/>
    <property type="project" value="InterPro"/>
</dbReference>
<dbReference type="CDD" id="cd02440">
    <property type="entry name" value="AdoMet_MTases"/>
    <property type="match status" value="1"/>
</dbReference>
<dbReference type="FunFam" id="3.40.50.150:FF:000046">
    <property type="entry name" value="Ribosomal RNA large subunit methyltransferase G"/>
    <property type="match status" value="1"/>
</dbReference>
<dbReference type="Gene3D" id="3.40.50.150">
    <property type="entry name" value="Vaccinia Virus protein VP39"/>
    <property type="match status" value="2"/>
</dbReference>
<dbReference type="HAMAP" id="MF_01859">
    <property type="entry name" value="23SrRNA_methyltr_G"/>
    <property type="match status" value="1"/>
</dbReference>
<dbReference type="InterPro" id="IPR002052">
    <property type="entry name" value="DNA_methylase_N6_adenine_CS"/>
</dbReference>
<dbReference type="InterPro" id="IPR017237">
    <property type="entry name" value="rRNA_m2G-MeTrfase_RlmG"/>
</dbReference>
<dbReference type="InterPro" id="IPR046977">
    <property type="entry name" value="RsmC/RlmG"/>
</dbReference>
<dbReference type="InterPro" id="IPR029063">
    <property type="entry name" value="SAM-dependent_MTases_sf"/>
</dbReference>
<dbReference type="InterPro" id="IPR007848">
    <property type="entry name" value="Small_mtfrase_dom"/>
</dbReference>
<dbReference type="PANTHER" id="PTHR47816:SF5">
    <property type="entry name" value="RIBOSOMAL RNA LARGE SUBUNIT METHYLTRANSFERASE G"/>
    <property type="match status" value="1"/>
</dbReference>
<dbReference type="PANTHER" id="PTHR47816">
    <property type="entry name" value="RIBOSOMAL RNA SMALL SUBUNIT METHYLTRANSFERASE C"/>
    <property type="match status" value="1"/>
</dbReference>
<dbReference type="Pfam" id="PF05175">
    <property type="entry name" value="MTS"/>
    <property type="match status" value="1"/>
</dbReference>
<dbReference type="PIRSF" id="PIRSF037565">
    <property type="entry name" value="RRNA_m2G_Mtase_RsmD_prd"/>
    <property type="match status" value="1"/>
</dbReference>
<dbReference type="SUPFAM" id="SSF53335">
    <property type="entry name" value="S-adenosyl-L-methionine-dependent methyltransferases"/>
    <property type="match status" value="1"/>
</dbReference>
<reference key="1">
    <citation type="journal article" date="2005" name="Proc. Natl. Acad. Sci. U.S.A.">
        <title>The psychrophilic lifestyle as revealed by the genome sequence of Colwellia psychrerythraea 34H through genomic and proteomic analyses.</title>
        <authorList>
            <person name="Methe B.A."/>
            <person name="Nelson K.E."/>
            <person name="Deming J.W."/>
            <person name="Momen B."/>
            <person name="Melamud E."/>
            <person name="Zhang X."/>
            <person name="Moult J."/>
            <person name="Madupu R."/>
            <person name="Nelson W.C."/>
            <person name="Dodson R.J."/>
            <person name="Brinkac L.M."/>
            <person name="Daugherty S.C."/>
            <person name="Durkin A.S."/>
            <person name="DeBoy R.T."/>
            <person name="Kolonay J.F."/>
            <person name="Sullivan S.A."/>
            <person name="Zhou L."/>
            <person name="Davidsen T.M."/>
            <person name="Wu M."/>
            <person name="Huston A.L."/>
            <person name="Lewis M."/>
            <person name="Weaver B."/>
            <person name="Weidman J.F."/>
            <person name="Khouri H."/>
            <person name="Utterback T.R."/>
            <person name="Feldblyum T.V."/>
            <person name="Fraser C.M."/>
        </authorList>
    </citation>
    <scope>NUCLEOTIDE SEQUENCE [LARGE SCALE GENOMIC DNA]</scope>
    <source>
        <strain>34H / ATCC BAA-681</strain>
    </source>
</reference>
<organism>
    <name type="scientific">Colwellia psychrerythraea (strain 34H / ATCC BAA-681)</name>
    <name type="common">Vibrio psychroerythus</name>
    <dbReference type="NCBI Taxonomy" id="167879"/>
    <lineage>
        <taxon>Bacteria</taxon>
        <taxon>Pseudomonadati</taxon>
        <taxon>Pseudomonadota</taxon>
        <taxon>Gammaproteobacteria</taxon>
        <taxon>Alteromonadales</taxon>
        <taxon>Colwelliaceae</taxon>
        <taxon>Colwellia</taxon>
    </lineage>
</organism>
<evidence type="ECO:0000255" key="1">
    <source>
        <dbReference type="HAMAP-Rule" id="MF_01859"/>
    </source>
</evidence>
<feature type="chain" id="PRO_0000366450" description="Ribosomal RNA large subunit methyltransferase G">
    <location>
        <begin position="1"/>
        <end position="392"/>
    </location>
</feature>
<sequence length="392" mass="43756">MISPFIVNDKNLFLSRFPVSQVNRSLQAWDSADEYLINHVHDQNLINAQTKVAIFNDAFGALAVNFCQSTSENPEVISINDSYISSEGASYNIEQNSLDDSHFTQLNSLDSLPNNIDVILYKIPKSKSLLIEQLIQIKKSVNENCIFIAADRAKEIHSSTLKVFEKHLGTTKTSLAVKKARLVFCQFDNKQVHQSPFPTVWSIPHKSTNDLPSRELTISNHANVYAREKLDIGARYFIENLPTVAANSTVIDLGCGNGVIGLTVLANQPEAHVQFIDESTMAISSAKQNIMTNLPDVIEQCEFTLNDSLTDIEGGSVDLILCNPPFHQNTATTDHIAWQMFKDSHRVLKKGGELRIIGNQKLAYHIKLQRLFGNETLIASNDKFVTQSAIKR</sequence>